<dbReference type="EMBL" id="CP000699">
    <property type="protein sequence ID" value="ABQ67700.1"/>
    <property type="molecule type" value="Genomic_DNA"/>
</dbReference>
<dbReference type="SMR" id="A5V5Y4"/>
<dbReference type="STRING" id="392499.Swit_1335"/>
<dbReference type="PaxDb" id="392499-Swit_1335"/>
<dbReference type="KEGG" id="swi:Swit_1335"/>
<dbReference type="eggNOG" id="COG1841">
    <property type="taxonomic scope" value="Bacteria"/>
</dbReference>
<dbReference type="HOGENOM" id="CLU_131047_1_2_5"/>
<dbReference type="OrthoDB" id="9812790at2"/>
<dbReference type="Proteomes" id="UP000001989">
    <property type="component" value="Chromosome"/>
</dbReference>
<dbReference type="GO" id="GO:0022625">
    <property type="term" value="C:cytosolic large ribosomal subunit"/>
    <property type="evidence" value="ECO:0007669"/>
    <property type="project" value="TreeGrafter"/>
</dbReference>
<dbReference type="GO" id="GO:0003735">
    <property type="term" value="F:structural constituent of ribosome"/>
    <property type="evidence" value="ECO:0007669"/>
    <property type="project" value="InterPro"/>
</dbReference>
<dbReference type="GO" id="GO:0006412">
    <property type="term" value="P:translation"/>
    <property type="evidence" value="ECO:0007669"/>
    <property type="project" value="UniProtKB-UniRule"/>
</dbReference>
<dbReference type="CDD" id="cd01658">
    <property type="entry name" value="Ribosomal_L30"/>
    <property type="match status" value="1"/>
</dbReference>
<dbReference type="Gene3D" id="3.30.1390.20">
    <property type="entry name" value="Ribosomal protein L30, ferredoxin-like fold domain"/>
    <property type="match status" value="1"/>
</dbReference>
<dbReference type="HAMAP" id="MF_01371_B">
    <property type="entry name" value="Ribosomal_uL30_B"/>
    <property type="match status" value="1"/>
</dbReference>
<dbReference type="InterPro" id="IPR036919">
    <property type="entry name" value="Ribo_uL30_ferredoxin-like_sf"/>
</dbReference>
<dbReference type="InterPro" id="IPR005996">
    <property type="entry name" value="Ribosomal_uL30_bac-type"/>
</dbReference>
<dbReference type="InterPro" id="IPR016082">
    <property type="entry name" value="Ribosomal_uL30_ferredoxin-like"/>
</dbReference>
<dbReference type="NCBIfam" id="TIGR01308">
    <property type="entry name" value="rpmD_bact"/>
    <property type="match status" value="1"/>
</dbReference>
<dbReference type="PANTHER" id="PTHR15892:SF2">
    <property type="entry name" value="LARGE RIBOSOMAL SUBUNIT PROTEIN UL30M"/>
    <property type="match status" value="1"/>
</dbReference>
<dbReference type="PANTHER" id="PTHR15892">
    <property type="entry name" value="MITOCHONDRIAL RIBOSOMAL PROTEIN L30"/>
    <property type="match status" value="1"/>
</dbReference>
<dbReference type="Pfam" id="PF00327">
    <property type="entry name" value="Ribosomal_L30"/>
    <property type="match status" value="1"/>
</dbReference>
<dbReference type="PIRSF" id="PIRSF002211">
    <property type="entry name" value="Ribosomal_L30_bac-type"/>
    <property type="match status" value="1"/>
</dbReference>
<dbReference type="SUPFAM" id="SSF55129">
    <property type="entry name" value="Ribosomal protein L30p/L7e"/>
    <property type="match status" value="1"/>
</dbReference>
<proteinExistence type="inferred from homology"/>
<name>RL30_RHIWR</name>
<keyword id="KW-1185">Reference proteome</keyword>
<keyword id="KW-0687">Ribonucleoprotein</keyword>
<keyword id="KW-0689">Ribosomal protein</keyword>
<accession>A5V5Y4</accession>
<reference key="1">
    <citation type="journal article" date="2010" name="J. Bacteriol.">
        <title>Genome sequence of the dioxin-mineralizing bacterium Sphingomonas wittichii RW1.</title>
        <authorList>
            <person name="Miller T.R."/>
            <person name="Delcher A.L."/>
            <person name="Salzberg S.L."/>
            <person name="Saunders E."/>
            <person name="Detter J.C."/>
            <person name="Halden R.U."/>
        </authorList>
    </citation>
    <scope>NUCLEOTIDE SEQUENCE [LARGE SCALE GENOMIC DNA]</scope>
    <source>
        <strain>DSM 6014 / CCUG 31198 / JCM 15750 / NBRC 105917 / EY 4224 / RW1</strain>
    </source>
</reference>
<evidence type="ECO:0000255" key="1">
    <source>
        <dbReference type="HAMAP-Rule" id="MF_01371"/>
    </source>
</evidence>
<evidence type="ECO:0000305" key="2"/>
<gene>
    <name evidence="1" type="primary">rpmD</name>
    <name type="ordered locus">Swit_1335</name>
</gene>
<protein>
    <recommendedName>
        <fullName evidence="1">Large ribosomal subunit protein uL30</fullName>
    </recommendedName>
    <alternativeName>
        <fullName evidence="2">50S ribosomal protein L30</fullName>
    </alternativeName>
</protein>
<sequence length="61" mass="6882">MAGKTLKVTQIGSPIRRTADQRATLIGLGLNKMHRTRELQDTPEVRGMIRKVQHMVKVDEA</sequence>
<feature type="chain" id="PRO_1000073453" description="Large ribosomal subunit protein uL30">
    <location>
        <begin position="1"/>
        <end position="61"/>
    </location>
</feature>
<organism>
    <name type="scientific">Rhizorhabdus wittichii (strain DSM 6014 / CCUG 31198 / JCM 15750 / NBRC 105917 / EY 4224 / RW1)</name>
    <name type="common">Sphingomonas wittichii</name>
    <dbReference type="NCBI Taxonomy" id="392499"/>
    <lineage>
        <taxon>Bacteria</taxon>
        <taxon>Pseudomonadati</taxon>
        <taxon>Pseudomonadota</taxon>
        <taxon>Alphaproteobacteria</taxon>
        <taxon>Sphingomonadales</taxon>
        <taxon>Sphingomonadaceae</taxon>
        <taxon>Rhizorhabdus</taxon>
    </lineage>
</organism>
<comment type="subunit">
    <text evidence="1">Part of the 50S ribosomal subunit.</text>
</comment>
<comment type="similarity">
    <text evidence="1">Belongs to the universal ribosomal protein uL30 family.</text>
</comment>